<comment type="function">
    <text evidence="2">Synthesizes glutathione from L-glutamate and L-cysteine via gamma-L-glutamyl-L-cysteine.</text>
</comment>
<comment type="catalytic activity">
    <reaction evidence="2">
        <text>L-cysteine + L-glutamate + ATP = gamma-L-glutamyl-L-cysteine + ADP + phosphate + H(+)</text>
        <dbReference type="Rhea" id="RHEA:13285"/>
        <dbReference type="ChEBI" id="CHEBI:15378"/>
        <dbReference type="ChEBI" id="CHEBI:29985"/>
        <dbReference type="ChEBI" id="CHEBI:30616"/>
        <dbReference type="ChEBI" id="CHEBI:35235"/>
        <dbReference type="ChEBI" id="CHEBI:43474"/>
        <dbReference type="ChEBI" id="CHEBI:58173"/>
        <dbReference type="ChEBI" id="CHEBI:456216"/>
        <dbReference type="EC" id="6.3.2.2"/>
    </reaction>
</comment>
<comment type="catalytic activity">
    <reaction evidence="2">
        <text>gamma-L-glutamyl-L-cysteine + glycine + ATP = glutathione + ADP + phosphate + H(+)</text>
        <dbReference type="Rhea" id="RHEA:13557"/>
        <dbReference type="ChEBI" id="CHEBI:15378"/>
        <dbReference type="ChEBI" id="CHEBI:30616"/>
        <dbReference type="ChEBI" id="CHEBI:43474"/>
        <dbReference type="ChEBI" id="CHEBI:57305"/>
        <dbReference type="ChEBI" id="CHEBI:57925"/>
        <dbReference type="ChEBI" id="CHEBI:58173"/>
        <dbReference type="ChEBI" id="CHEBI:456216"/>
        <dbReference type="EC" id="6.3.2.3"/>
    </reaction>
</comment>
<comment type="cofactor">
    <cofactor evidence="1">
        <name>Mg(2+)</name>
        <dbReference type="ChEBI" id="CHEBI:18420"/>
    </cofactor>
    <cofactor evidence="1">
        <name>Mn(2+)</name>
        <dbReference type="ChEBI" id="CHEBI:29035"/>
    </cofactor>
    <text evidence="1">Binds 2 magnesium or manganese ions per subunit.</text>
</comment>
<comment type="pathway">
    <text evidence="2">Sulfur metabolism; glutathione biosynthesis; glutathione from L-cysteine and L-glutamate: step 1/2.</text>
</comment>
<comment type="pathway">
    <text evidence="2">Sulfur metabolism; glutathione biosynthesis; glutathione from L-cysteine and L-glutamate: step 2/2.</text>
</comment>
<comment type="subunit">
    <text evidence="2">Monomer.</text>
</comment>
<comment type="similarity">
    <text evidence="2">In the N-terminal section; belongs to the glutamate--cysteine ligase type 1 family. Type 2 subfamily.</text>
</comment>
<comment type="sequence caution" evidence="3">
    <conflict type="erroneous initiation">
        <sequence resource="EMBL-CDS" id="CAC98138"/>
    </conflict>
</comment>
<feature type="chain" id="PRO_0000192553" description="Glutathione biosynthesis bifunctional protein GshAB">
    <location>
        <begin position="1"/>
        <end position="769"/>
    </location>
</feature>
<feature type="domain" description="ATP-grasp" evidence="2">
    <location>
        <begin position="514"/>
        <end position="768"/>
    </location>
</feature>
<feature type="region of interest" description="Glutamate--cysteine ligase">
    <location>
        <begin position="1"/>
        <end position="347"/>
    </location>
</feature>
<feature type="binding site" evidence="2">
    <location>
        <begin position="541"/>
        <end position="599"/>
    </location>
    <ligand>
        <name>ATP</name>
        <dbReference type="ChEBI" id="CHEBI:30616"/>
    </ligand>
</feature>
<feature type="binding site" evidence="2">
    <location>
        <position position="721"/>
    </location>
    <ligand>
        <name>Mg(2+)</name>
        <dbReference type="ChEBI" id="CHEBI:18420"/>
        <label>1</label>
    </ligand>
</feature>
<feature type="binding site" evidence="2">
    <location>
        <position position="721"/>
    </location>
    <ligand>
        <name>Mn(2+)</name>
        <dbReference type="ChEBI" id="CHEBI:29035"/>
        <label>1</label>
    </ligand>
</feature>
<feature type="binding site" evidence="2">
    <location>
        <position position="738"/>
    </location>
    <ligand>
        <name>Mg(2+)</name>
        <dbReference type="ChEBI" id="CHEBI:18420"/>
        <label>1</label>
    </ligand>
</feature>
<feature type="binding site" evidence="2">
    <location>
        <position position="738"/>
    </location>
    <ligand>
        <name>Mg(2+)</name>
        <dbReference type="ChEBI" id="CHEBI:18420"/>
        <label>2</label>
    </ligand>
</feature>
<feature type="binding site" evidence="2">
    <location>
        <position position="738"/>
    </location>
    <ligand>
        <name>Mn(2+)</name>
        <dbReference type="ChEBI" id="CHEBI:29035"/>
        <label>1</label>
    </ligand>
</feature>
<feature type="binding site" evidence="2">
    <location>
        <position position="738"/>
    </location>
    <ligand>
        <name>Mn(2+)</name>
        <dbReference type="ChEBI" id="CHEBI:29035"/>
        <label>2</label>
    </ligand>
</feature>
<feature type="binding site" evidence="2">
    <location>
        <position position="740"/>
    </location>
    <ligand>
        <name>Mg(2+)</name>
        <dbReference type="ChEBI" id="CHEBI:18420"/>
        <label>2</label>
    </ligand>
</feature>
<feature type="binding site" evidence="2">
    <location>
        <position position="740"/>
    </location>
    <ligand>
        <name>Mn(2+)</name>
        <dbReference type="ChEBI" id="CHEBI:29035"/>
        <label>2</label>
    </ligand>
</feature>
<reference key="1">
    <citation type="journal article" date="2001" name="Science">
        <title>Comparative genomics of Listeria species.</title>
        <authorList>
            <person name="Glaser P."/>
            <person name="Frangeul L."/>
            <person name="Buchrieser C."/>
            <person name="Rusniok C."/>
            <person name="Amend A."/>
            <person name="Baquero F."/>
            <person name="Berche P."/>
            <person name="Bloecker H."/>
            <person name="Brandt P."/>
            <person name="Chakraborty T."/>
            <person name="Charbit A."/>
            <person name="Chetouani F."/>
            <person name="Couve E."/>
            <person name="de Daruvar A."/>
            <person name="Dehoux P."/>
            <person name="Domann E."/>
            <person name="Dominguez-Bernal G."/>
            <person name="Duchaud E."/>
            <person name="Durant L."/>
            <person name="Dussurget O."/>
            <person name="Entian K.-D."/>
            <person name="Fsihi H."/>
            <person name="Garcia-del Portillo F."/>
            <person name="Garrido P."/>
            <person name="Gautier L."/>
            <person name="Goebel W."/>
            <person name="Gomez-Lopez N."/>
            <person name="Hain T."/>
            <person name="Hauf J."/>
            <person name="Jackson D."/>
            <person name="Jones L.-M."/>
            <person name="Kaerst U."/>
            <person name="Kreft J."/>
            <person name="Kuhn M."/>
            <person name="Kunst F."/>
            <person name="Kurapkat G."/>
            <person name="Madueno E."/>
            <person name="Maitournam A."/>
            <person name="Mata Vicente J."/>
            <person name="Ng E."/>
            <person name="Nedjari H."/>
            <person name="Nordsiek G."/>
            <person name="Novella S."/>
            <person name="de Pablos B."/>
            <person name="Perez-Diaz J.-C."/>
            <person name="Purcell R."/>
            <person name="Remmel B."/>
            <person name="Rose M."/>
            <person name="Schlueter T."/>
            <person name="Simoes N."/>
            <person name="Tierrez A."/>
            <person name="Vazquez-Boland J.-A."/>
            <person name="Voss H."/>
            <person name="Wehland J."/>
            <person name="Cossart P."/>
        </authorList>
    </citation>
    <scope>NUCLEOTIDE SEQUENCE [LARGE SCALE GENOMIC DNA]</scope>
    <source>
        <strain>ATCC BAA-680 / CLIP 11262</strain>
    </source>
</reference>
<gene>
    <name evidence="2" type="primary">gshAB</name>
    <name evidence="2" type="synonym">gshF</name>
    <name type="ordered locus">lin2913</name>
</gene>
<keyword id="KW-0067">ATP-binding</keyword>
<keyword id="KW-0317">Glutathione biosynthesis</keyword>
<keyword id="KW-0436">Ligase</keyword>
<keyword id="KW-0460">Magnesium</keyword>
<keyword id="KW-0464">Manganese</keyword>
<keyword id="KW-0479">Metal-binding</keyword>
<keyword id="KW-0511">Multifunctional enzyme</keyword>
<keyword id="KW-0547">Nucleotide-binding</keyword>
<proteinExistence type="inferred from homology"/>
<accession>Q926X7</accession>
<name>GSHAB_LISIN</name>
<evidence type="ECO:0000250" key="1"/>
<evidence type="ECO:0000255" key="2">
    <source>
        <dbReference type="HAMAP-Rule" id="MF_00782"/>
    </source>
</evidence>
<evidence type="ECO:0000305" key="3"/>
<protein>
    <recommendedName>
        <fullName evidence="2">Glutathione biosynthesis bifunctional protein GshAB</fullName>
    </recommendedName>
    <alternativeName>
        <fullName evidence="2">Gamma-GCS-GS</fullName>
        <shortName evidence="2">GCS-GS</shortName>
    </alternativeName>
    <domain>
        <recommendedName>
            <fullName evidence="2">Glutamate--cysteine ligase</fullName>
            <ecNumber evidence="2">6.3.2.2</ecNumber>
        </recommendedName>
        <alternativeName>
            <fullName evidence="2">Gamma-ECS</fullName>
            <shortName evidence="2">GCS</shortName>
        </alternativeName>
        <alternativeName>
            <fullName evidence="2">Gamma-glutamylcysteine synthetase</fullName>
        </alternativeName>
    </domain>
    <domain>
        <recommendedName>
            <fullName evidence="2">Glutathione synthetase</fullName>
            <ecNumber evidence="2">6.3.2.3</ecNumber>
        </recommendedName>
        <alternativeName>
            <fullName evidence="2">GSH synthetase</fullName>
            <shortName evidence="2">GS</shortName>
            <shortName evidence="2">GSH-S</shortName>
            <shortName evidence="2">GSHase</shortName>
        </alternativeName>
        <alternativeName>
            <fullName evidence="2">Glutathione synthase</fullName>
        </alternativeName>
    </domain>
</protein>
<sequence length="769" mass="87659">MLDSFKENEALRKYLFSGHFGLEKENIRVTSDGKLALTPHPAIFGPKEDNPYIKTDFSESQIEMITPVTDSIDAVYEWLENLHNIVSLRAENELLWPSSNPPILPAEEDIPIAEYKTPDSPDRKYREHLAKGYGKKIQLLSGIHYNFSFPEALIDGLYAEISHPNESKRDFKNRLYLKVAKYFMKNRWLLIYLTGASPVYLADFTKTNSEEVLNDGSKALHRGISLRNSNAGYKNKESLFVDYNSFDAYISSISNYIEAGKIESMREFYNPIRLKNAHTDQTVESLAKHGVEYLEIRSIDLNPLEPNGISKDELIFIHLFLIKGLLSEDRELCANNQQLADENENNIALNGLAQPAIKNCDNEEMSLADAGLLELDKMSDFIQSLIPNDNHFQAIIEKQKERLLHPEKTIAAQVQAQSAKEGYVEFHLNQAKTYMEETEALAYKLVGAEDMELSTQIIWKDAIARGIKVDVLDRAENFLRFQKGDHVEYVKQASKTSKDNYVSVLMMENKVVTKLVLAEHGIRVPFGDSFSDQALALEAFSLFEDKQIVVKPKSTNYGWGISIFKNKFTLEDYQEALNIAFSYDSSVIIEEFIPGDEFRFLVINDKVEAVLKRVPANVTGDGIHTVRQLVEEKNTDPLRGTDHLKPLEKIRTGPEETLMLSMQNLSWDSIPKAEEIIYLRENSNVSTGGDSIDYTEEMDDYFKEIAIRATQVLDAKICGVDIIVPRETIDRDKHAIIELNFNPAMHMHCFPYQGEKKKIGDKILDFLFE</sequence>
<dbReference type="EC" id="6.3.2.2" evidence="2"/>
<dbReference type="EC" id="6.3.2.3" evidence="2"/>
<dbReference type="EMBL" id="AL596174">
    <property type="protein sequence ID" value="CAC98138.1"/>
    <property type="status" value="ALT_INIT"/>
    <property type="molecule type" value="Genomic_DNA"/>
</dbReference>
<dbReference type="PIR" id="AB1796">
    <property type="entry name" value="AB1796"/>
</dbReference>
<dbReference type="SMR" id="Q926X7"/>
<dbReference type="STRING" id="272626.gene:17567299"/>
<dbReference type="KEGG" id="lin:lin2913"/>
<dbReference type="eggNOG" id="COG0189">
    <property type="taxonomic scope" value="Bacteria"/>
</dbReference>
<dbReference type="eggNOG" id="COG1181">
    <property type="taxonomic scope" value="Bacteria"/>
</dbReference>
<dbReference type="eggNOG" id="COG2918">
    <property type="taxonomic scope" value="Bacteria"/>
</dbReference>
<dbReference type="HOGENOM" id="CLU_020728_1_0_9"/>
<dbReference type="UniPathway" id="UPA00142">
    <property type="reaction ID" value="UER00209"/>
</dbReference>
<dbReference type="UniPathway" id="UPA00142">
    <property type="reaction ID" value="UER00210"/>
</dbReference>
<dbReference type="Proteomes" id="UP000002513">
    <property type="component" value="Chromosome"/>
</dbReference>
<dbReference type="GO" id="GO:0005829">
    <property type="term" value="C:cytosol"/>
    <property type="evidence" value="ECO:0007669"/>
    <property type="project" value="TreeGrafter"/>
</dbReference>
<dbReference type="GO" id="GO:0005524">
    <property type="term" value="F:ATP binding"/>
    <property type="evidence" value="ECO:0007669"/>
    <property type="project" value="UniProtKB-UniRule"/>
</dbReference>
<dbReference type="GO" id="GO:0004357">
    <property type="term" value="F:glutamate-cysteine ligase activity"/>
    <property type="evidence" value="ECO:0007669"/>
    <property type="project" value="UniProtKB-UniRule"/>
</dbReference>
<dbReference type="GO" id="GO:0004363">
    <property type="term" value="F:glutathione synthase activity"/>
    <property type="evidence" value="ECO:0007669"/>
    <property type="project" value="UniProtKB-UniRule"/>
</dbReference>
<dbReference type="GO" id="GO:0046872">
    <property type="term" value="F:metal ion binding"/>
    <property type="evidence" value="ECO:0007669"/>
    <property type="project" value="UniProtKB-KW"/>
</dbReference>
<dbReference type="FunFam" id="3.30.470.20:FF:000077">
    <property type="entry name" value="Glutathione biosynthesis bifunctional protein GshAB"/>
    <property type="match status" value="1"/>
</dbReference>
<dbReference type="FunFam" id="3.30.590.20:FF:000011">
    <property type="entry name" value="Glutathione biosynthesis bifunctional protein GshAB"/>
    <property type="match status" value="1"/>
</dbReference>
<dbReference type="Gene3D" id="3.30.590.20">
    <property type="match status" value="1"/>
</dbReference>
<dbReference type="Gene3D" id="3.30.1490.20">
    <property type="entry name" value="ATP-grasp fold, A domain"/>
    <property type="match status" value="1"/>
</dbReference>
<dbReference type="Gene3D" id="3.30.470.20">
    <property type="entry name" value="ATP-grasp fold, B domain"/>
    <property type="match status" value="2"/>
</dbReference>
<dbReference type="HAMAP" id="MF_00782">
    <property type="entry name" value="Glut_biosynth"/>
    <property type="match status" value="1"/>
</dbReference>
<dbReference type="InterPro" id="IPR011761">
    <property type="entry name" value="ATP-grasp"/>
</dbReference>
<dbReference type="InterPro" id="IPR013815">
    <property type="entry name" value="ATP_grasp_subdomain_1"/>
</dbReference>
<dbReference type="InterPro" id="IPR014746">
    <property type="entry name" value="Gln_synth/guanido_kin_cat_dom"/>
</dbReference>
<dbReference type="InterPro" id="IPR007370">
    <property type="entry name" value="Glu_cys_ligase"/>
</dbReference>
<dbReference type="InterPro" id="IPR006335">
    <property type="entry name" value="Glut_biosynth"/>
</dbReference>
<dbReference type="InterPro" id="IPR006334">
    <property type="entry name" value="Glut_cys_ligase"/>
</dbReference>
<dbReference type="InterPro" id="IPR040657">
    <property type="entry name" value="GshAB_ATP-grasp"/>
</dbReference>
<dbReference type="InterPro" id="IPR020561">
    <property type="entry name" value="PRibGlycinamid_synth_ATP-grasp"/>
</dbReference>
<dbReference type="NCBIfam" id="TIGR01435">
    <property type="entry name" value="glu_cys_lig_rel"/>
    <property type="match status" value="1"/>
</dbReference>
<dbReference type="NCBIfam" id="NF002688">
    <property type="entry name" value="PRK02471.1"/>
    <property type="match status" value="1"/>
</dbReference>
<dbReference type="PANTHER" id="PTHR38761">
    <property type="entry name" value="GLUTAMATE--CYSTEINE LIGASE"/>
    <property type="match status" value="1"/>
</dbReference>
<dbReference type="PANTHER" id="PTHR38761:SF1">
    <property type="entry name" value="GLUTAMATE--CYSTEINE LIGASE"/>
    <property type="match status" value="1"/>
</dbReference>
<dbReference type="Pfam" id="PF18419">
    <property type="entry name" value="ATP-grasp_6"/>
    <property type="match status" value="1"/>
</dbReference>
<dbReference type="Pfam" id="PF01071">
    <property type="entry name" value="GARS_A"/>
    <property type="match status" value="1"/>
</dbReference>
<dbReference type="Pfam" id="PF04262">
    <property type="entry name" value="Glu_cys_ligase"/>
    <property type="match status" value="2"/>
</dbReference>
<dbReference type="SUPFAM" id="SSF55931">
    <property type="entry name" value="Glutamine synthetase/guanido kinase"/>
    <property type="match status" value="1"/>
</dbReference>
<dbReference type="SUPFAM" id="SSF56059">
    <property type="entry name" value="Glutathione synthetase ATP-binding domain-like"/>
    <property type="match status" value="1"/>
</dbReference>
<dbReference type="PROSITE" id="PS50975">
    <property type="entry name" value="ATP_GRASP"/>
    <property type="match status" value="1"/>
</dbReference>
<organism>
    <name type="scientific">Listeria innocua serovar 6a (strain ATCC BAA-680 / CLIP 11262)</name>
    <dbReference type="NCBI Taxonomy" id="272626"/>
    <lineage>
        <taxon>Bacteria</taxon>
        <taxon>Bacillati</taxon>
        <taxon>Bacillota</taxon>
        <taxon>Bacilli</taxon>
        <taxon>Bacillales</taxon>
        <taxon>Listeriaceae</taxon>
        <taxon>Listeria</taxon>
    </lineage>
</organism>